<dbReference type="EMBL" id="AF279800">
    <property type="protein sequence ID" value="AAK69123.1"/>
    <property type="molecule type" value="Genomic_DNA"/>
</dbReference>
<dbReference type="GO" id="GO:0009507">
    <property type="term" value="C:chloroplast"/>
    <property type="evidence" value="ECO:0007669"/>
    <property type="project" value="UniProtKB-SubCell"/>
</dbReference>
<dbReference type="GO" id="GO:0003723">
    <property type="term" value="F:RNA binding"/>
    <property type="evidence" value="ECO:0007669"/>
    <property type="project" value="UniProtKB-KW"/>
</dbReference>
<dbReference type="GO" id="GO:0006397">
    <property type="term" value="P:mRNA processing"/>
    <property type="evidence" value="ECO:0007669"/>
    <property type="project" value="UniProtKB-KW"/>
</dbReference>
<dbReference type="GO" id="GO:0008380">
    <property type="term" value="P:RNA splicing"/>
    <property type="evidence" value="ECO:0007669"/>
    <property type="project" value="UniProtKB-UniRule"/>
</dbReference>
<dbReference type="GO" id="GO:0008033">
    <property type="term" value="P:tRNA processing"/>
    <property type="evidence" value="ECO:0007669"/>
    <property type="project" value="UniProtKB-KW"/>
</dbReference>
<dbReference type="HAMAP" id="MF_01390">
    <property type="entry name" value="MatK"/>
    <property type="match status" value="1"/>
</dbReference>
<dbReference type="InterPro" id="IPR024937">
    <property type="entry name" value="Domain_X"/>
</dbReference>
<dbReference type="InterPro" id="IPR002866">
    <property type="entry name" value="Maturase_MatK"/>
</dbReference>
<dbReference type="InterPro" id="IPR024942">
    <property type="entry name" value="Maturase_MatK_N"/>
</dbReference>
<dbReference type="PANTHER" id="PTHR34811">
    <property type="entry name" value="MATURASE K"/>
    <property type="match status" value="1"/>
</dbReference>
<dbReference type="PANTHER" id="PTHR34811:SF1">
    <property type="entry name" value="MATURASE K"/>
    <property type="match status" value="1"/>
</dbReference>
<dbReference type="Pfam" id="PF01348">
    <property type="entry name" value="Intron_maturas2"/>
    <property type="match status" value="1"/>
</dbReference>
<dbReference type="Pfam" id="PF01824">
    <property type="entry name" value="MatK_N"/>
    <property type="match status" value="1"/>
</dbReference>
<reference key="1">
    <citation type="submission" date="2000-06" db="EMBL/GenBank/DDBJ databases">
        <title>Chloroplast matK sequence data reconfirm the monophyly of extant gymnosperms and the coniferophytic origin of Gnetales.</title>
        <authorList>
            <person name="Chaw S.-M."/>
            <person name="Hu S.-H."/>
        </authorList>
    </citation>
    <scope>NUCLEOTIDE SEQUENCE [GENOMIC DNA]</scope>
</reference>
<comment type="function">
    <text evidence="1">Usually encoded in the trnK tRNA gene intron. Probably assists in splicing its own and other chloroplast group II introns.</text>
</comment>
<comment type="subcellular location">
    <subcellularLocation>
        <location>Plastid</location>
        <location>Chloroplast</location>
    </subcellularLocation>
</comment>
<comment type="similarity">
    <text evidence="1">Belongs to the intron maturase 2 family. MatK subfamily.</text>
</comment>
<geneLocation type="chloroplast"/>
<gene>
    <name evidence="1" type="primary">matK</name>
</gene>
<organism>
    <name type="scientific">Lepidozamia peroffskyana</name>
    <name type="common">Peroffsky's lepidozamia</name>
    <name type="synonym">Macrozamia peroffskyana</name>
    <dbReference type="NCBI Taxonomy" id="133430"/>
    <lineage>
        <taxon>Eukaryota</taxon>
        <taxon>Viridiplantae</taxon>
        <taxon>Streptophyta</taxon>
        <taxon>Embryophyta</taxon>
        <taxon>Tracheophyta</taxon>
        <taxon>Spermatophyta</taxon>
        <taxon>Cycadidae</taxon>
        <taxon>Cycadales</taxon>
        <taxon>Zamiaceae</taxon>
        <taxon>Lepidozamia</taxon>
    </lineage>
</organism>
<protein>
    <recommendedName>
        <fullName evidence="1">Maturase K</fullName>
    </recommendedName>
    <alternativeName>
        <fullName evidence="1">Intron maturase</fullName>
    </alternativeName>
</protein>
<accession>Q8MEX8</accession>
<evidence type="ECO:0000255" key="1">
    <source>
        <dbReference type="HAMAP-Rule" id="MF_01390"/>
    </source>
</evidence>
<name>MATK_LEPPR</name>
<proteinExistence type="inferred from homology"/>
<keyword id="KW-0150">Chloroplast</keyword>
<keyword id="KW-0507">mRNA processing</keyword>
<keyword id="KW-0934">Plastid</keyword>
<keyword id="KW-0694">RNA-binding</keyword>
<keyword id="KW-0819">tRNA processing</keyword>
<sequence>MDKFQRDGKEDTSRQWRFLYPLLFQEDLYTIAYDHYSNRSSSLEPMGNSSSNDRFSFLTVKRSISRIRQQNGSIVPFVNCDQNKLVGHNKSFYSELVLGGLTAIPGVPFSIRSKHPLEEXNEWTSFRSIHSIFPLMEDKIPHSNFILDIRIPHLTHPEILVRTFRRWIQDAPSLHSLRSVLHEHRNLIISSNLDQLILIASKENTRLSLFLWNYYAYECESLLVPLWKRFSHSRSLPYESFIERTPFYRKIEHIAIFYHKYLKKSLWFLKDPSIHYVKYRERSIIALRGTYLLVKKWRYHLTNFWQCHFHLWLQPYRIYIDELSNNGFSFLGYLLSAKMXPPVVKNKTVDDPFIPVLIXKGFDPAAPVXFLIGSLVKEKFCDISGHPFSRLAWTGLTDDDILDRFDRIWRNIFHYHSGSSKKDGLYHMKYILRLPCAKTLACKHKSAIRVVRERFGSELFTKSFPKERESIFLPFSKTRSQRERIWHSDIIQRNPSVNPWWKEHNLRIEPLFDR</sequence>
<feature type="chain" id="PRO_0000143472" description="Maturase K">
    <location>
        <begin position="1"/>
        <end position="514"/>
    </location>
</feature>